<name>EIF3D_DICDI</name>
<dbReference type="EMBL" id="AAFI02000012">
    <property type="protein sequence ID" value="EAL70206.1"/>
    <property type="molecule type" value="Genomic_DNA"/>
</dbReference>
<dbReference type="RefSeq" id="XP_644224.1">
    <property type="nucleotide sequence ID" value="XM_639132.1"/>
</dbReference>
<dbReference type="SMR" id="Q554U9"/>
<dbReference type="FunCoup" id="Q554U9">
    <property type="interactions" value="1281"/>
</dbReference>
<dbReference type="STRING" id="44689.Q554U9"/>
<dbReference type="PaxDb" id="44689-DDB0219927"/>
<dbReference type="EnsemblProtists" id="EAL70206">
    <property type="protein sequence ID" value="EAL70206"/>
    <property type="gene ID" value="DDB_G0274627"/>
</dbReference>
<dbReference type="GeneID" id="8619653"/>
<dbReference type="KEGG" id="ddi:DDB_G0274627"/>
<dbReference type="dictyBase" id="DDB_G0274627">
    <property type="gene designation" value="eif3D"/>
</dbReference>
<dbReference type="VEuPathDB" id="AmoebaDB:DDB_G0274627"/>
<dbReference type="eggNOG" id="KOG2479">
    <property type="taxonomic scope" value="Eukaryota"/>
</dbReference>
<dbReference type="HOGENOM" id="CLU_024521_2_0_1"/>
<dbReference type="InParanoid" id="Q554U9"/>
<dbReference type="OMA" id="CKHNGVI"/>
<dbReference type="PhylomeDB" id="Q554U9"/>
<dbReference type="Reactome" id="R-DDI-156827">
    <property type="pathway name" value="L13a-mediated translational silencing of Ceruloplasmin expression"/>
</dbReference>
<dbReference type="Reactome" id="R-DDI-72689">
    <property type="pathway name" value="Formation of a pool of free 40S subunits"/>
</dbReference>
<dbReference type="Reactome" id="R-DDI-72695">
    <property type="pathway name" value="Formation of the ternary complex, and subsequently, the 43S complex"/>
</dbReference>
<dbReference type="Reactome" id="R-DDI-72702">
    <property type="pathway name" value="Ribosomal scanning and start codon recognition"/>
</dbReference>
<dbReference type="PRO" id="PR:Q554U9"/>
<dbReference type="Proteomes" id="UP000002195">
    <property type="component" value="Chromosome 2"/>
</dbReference>
<dbReference type="GO" id="GO:0005813">
    <property type="term" value="C:centrosome"/>
    <property type="evidence" value="ECO:0000304"/>
    <property type="project" value="dictyBase"/>
</dbReference>
<dbReference type="GO" id="GO:0016282">
    <property type="term" value="C:eukaryotic 43S preinitiation complex"/>
    <property type="evidence" value="ECO:0007669"/>
    <property type="project" value="UniProtKB-UniRule"/>
</dbReference>
<dbReference type="GO" id="GO:0033290">
    <property type="term" value="C:eukaryotic 48S preinitiation complex"/>
    <property type="evidence" value="ECO:0007669"/>
    <property type="project" value="UniProtKB-UniRule"/>
</dbReference>
<dbReference type="GO" id="GO:0005852">
    <property type="term" value="C:eukaryotic translation initiation factor 3 complex"/>
    <property type="evidence" value="ECO:0000250"/>
    <property type="project" value="UniProtKB"/>
</dbReference>
<dbReference type="GO" id="GO:0045335">
    <property type="term" value="C:phagocytic vesicle"/>
    <property type="evidence" value="ECO:0007005"/>
    <property type="project" value="dictyBase"/>
</dbReference>
<dbReference type="GO" id="GO:0098808">
    <property type="term" value="F:mRNA cap binding"/>
    <property type="evidence" value="ECO:0007669"/>
    <property type="project" value="UniProtKB-UniRule"/>
</dbReference>
<dbReference type="GO" id="GO:0003743">
    <property type="term" value="F:translation initiation factor activity"/>
    <property type="evidence" value="ECO:0000250"/>
    <property type="project" value="UniProtKB"/>
</dbReference>
<dbReference type="GO" id="GO:0002191">
    <property type="term" value="P:cap-dependent translational initiation"/>
    <property type="evidence" value="ECO:0007669"/>
    <property type="project" value="UniProtKB-UniRule"/>
</dbReference>
<dbReference type="GO" id="GO:0001732">
    <property type="term" value="P:formation of cytoplasmic translation initiation complex"/>
    <property type="evidence" value="ECO:0007669"/>
    <property type="project" value="UniProtKB-UniRule"/>
</dbReference>
<dbReference type="GO" id="GO:0009617">
    <property type="term" value="P:response to bacterium"/>
    <property type="evidence" value="ECO:0007007"/>
    <property type="project" value="dictyBase"/>
</dbReference>
<dbReference type="GO" id="GO:0006413">
    <property type="term" value="P:translational initiation"/>
    <property type="evidence" value="ECO:0000250"/>
    <property type="project" value="UniProtKB"/>
</dbReference>
<dbReference type="HAMAP" id="MF_03003">
    <property type="entry name" value="eIF3d"/>
    <property type="match status" value="1"/>
</dbReference>
<dbReference type="InterPro" id="IPR007783">
    <property type="entry name" value="eIF3d"/>
</dbReference>
<dbReference type="PANTHER" id="PTHR12399">
    <property type="entry name" value="EUKARYOTIC TRANSLATION INITIATION FACTOR 3 SUBUNIT 7"/>
    <property type="match status" value="1"/>
</dbReference>
<dbReference type="PANTHER" id="PTHR12399:SF0">
    <property type="entry name" value="EUKARYOTIC TRANSLATION INITIATION FACTOR 3 SUBUNIT D"/>
    <property type="match status" value="1"/>
</dbReference>
<dbReference type="Pfam" id="PF05091">
    <property type="entry name" value="eIF-3_zeta"/>
    <property type="match status" value="1"/>
</dbReference>
<dbReference type="PIRSF" id="PIRSF016281">
    <property type="entry name" value="EIF-3_zeta"/>
    <property type="match status" value="1"/>
</dbReference>
<proteinExistence type="inferred from homology"/>
<feature type="chain" id="PRO_0000327633" description="Eukaryotic translation initiation factor 3 subunit D">
    <location>
        <begin position="1"/>
        <end position="527"/>
    </location>
</feature>
<feature type="region of interest" description="Disordered" evidence="3">
    <location>
        <begin position="100"/>
        <end position="136"/>
    </location>
</feature>
<feature type="region of interest" description="RNA gate" evidence="1">
    <location>
        <begin position="264"/>
        <end position="277"/>
    </location>
</feature>
<feature type="region of interest" description="Disordered" evidence="3">
    <location>
        <begin position="503"/>
        <end position="527"/>
    </location>
</feature>
<feature type="compositionally biased region" description="Gly residues" evidence="3">
    <location>
        <begin position="107"/>
        <end position="123"/>
    </location>
</feature>
<feature type="compositionally biased region" description="Acidic residues" evidence="3">
    <location>
        <begin position="504"/>
        <end position="516"/>
    </location>
</feature>
<feature type="compositionally biased region" description="Basic and acidic residues" evidence="3">
    <location>
        <begin position="517"/>
        <end position="527"/>
    </location>
</feature>
<reference key="1">
    <citation type="journal article" date="2002" name="Nature">
        <title>Sequence and analysis of chromosome 2 of Dictyostelium discoideum.</title>
        <authorList>
            <person name="Gloeckner G."/>
            <person name="Eichinger L."/>
            <person name="Szafranski K."/>
            <person name="Pachebat J.A."/>
            <person name="Bankier A.T."/>
            <person name="Dear P.H."/>
            <person name="Lehmann R."/>
            <person name="Baumgart C."/>
            <person name="Parra G."/>
            <person name="Abril J.F."/>
            <person name="Guigo R."/>
            <person name="Kumpf K."/>
            <person name="Tunggal B."/>
            <person name="Cox E.C."/>
            <person name="Quail M.A."/>
            <person name="Platzer M."/>
            <person name="Rosenthal A."/>
            <person name="Noegel A.A."/>
        </authorList>
    </citation>
    <scope>NUCLEOTIDE SEQUENCE [LARGE SCALE GENOMIC DNA]</scope>
    <source>
        <strain>AX4</strain>
    </source>
</reference>
<reference key="2">
    <citation type="journal article" date="2005" name="Nature">
        <title>The genome of the social amoeba Dictyostelium discoideum.</title>
        <authorList>
            <person name="Eichinger L."/>
            <person name="Pachebat J.A."/>
            <person name="Gloeckner G."/>
            <person name="Rajandream M.A."/>
            <person name="Sucgang R."/>
            <person name="Berriman M."/>
            <person name="Song J."/>
            <person name="Olsen R."/>
            <person name="Szafranski K."/>
            <person name="Xu Q."/>
            <person name="Tunggal B."/>
            <person name="Kummerfeld S."/>
            <person name="Madera M."/>
            <person name="Konfortov B.A."/>
            <person name="Rivero F."/>
            <person name="Bankier A.T."/>
            <person name="Lehmann R."/>
            <person name="Hamlin N."/>
            <person name="Davies R."/>
            <person name="Gaudet P."/>
            <person name="Fey P."/>
            <person name="Pilcher K."/>
            <person name="Chen G."/>
            <person name="Saunders D."/>
            <person name="Sodergren E.J."/>
            <person name="Davis P."/>
            <person name="Kerhornou A."/>
            <person name="Nie X."/>
            <person name="Hall N."/>
            <person name="Anjard C."/>
            <person name="Hemphill L."/>
            <person name="Bason N."/>
            <person name="Farbrother P."/>
            <person name="Desany B."/>
            <person name="Just E."/>
            <person name="Morio T."/>
            <person name="Rost R."/>
            <person name="Churcher C.M."/>
            <person name="Cooper J."/>
            <person name="Haydock S."/>
            <person name="van Driessche N."/>
            <person name="Cronin A."/>
            <person name="Goodhead I."/>
            <person name="Muzny D.M."/>
            <person name="Mourier T."/>
            <person name="Pain A."/>
            <person name="Lu M."/>
            <person name="Harper D."/>
            <person name="Lindsay R."/>
            <person name="Hauser H."/>
            <person name="James K.D."/>
            <person name="Quiles M."/>
            <person name="Madan Babu M."/>
            <person name="Saito T."/>
            <person name="Buchrieser C."/>
            <person name="Wardroper A."/>
            <person name="Felder M."/>
            <person name="Thangavelu M."/>
            <person name="Johnson D."/>
            <person name="Knights A."/>
            <person name="Loulseged H."/>
            <person name="Mungall K.L."/>
            <person name="Oliver K."/>
            <person name="Price C."/>
            <person name="Quail M.A."/>
            <person name="Urushihara H."/>
            <person name="Hernandez J."/>
            <person name="Rabbinowitsch E."/>
            <person name="Steffen D."/>
            <person name="Sanders M."/>
            <person name="Ma J."/>
            <person name="Kohara Y."/>
            <person name="Sharp S."/>
            <person name="Simmonds M.N."/>
            <person name="Spiegler S."/>
            <person name="Tivey A."/>
            <person name="Sugano S."/>
            <person name="White B."/>
            <person name="Walker D."/>
            <person name="Woodward J.R."/>
            <person name="Winckler T."/>
            <person name="Tanaka Y."/>
            <person name="Shaulsky G."/>
            <person name="Schleicher M."/>
            <person name="Weinstock G.M."/>
            <person name="Rosenthal A."/>
            <person name="Cox E.C."/>
            <person name="Chisholm R.L."/>
            <person name="Gibbs R.A."/>
            <person name="Loomis W.F."/>
            <person name="Platzer M."/>
            <person name="Kay R.R."/>
            <person name="Williams J.G."/>
            <person name="Dear P.H."/>
            <person name="Noegel A.A."/>
            <person name="Barrell B.G."/>
            <person name="Kuspa A."/>
        </authorList>
    </citation>
    <scope>NUCLEOTIDE SEQUENCE [LARGE SCALE GENOMIC DNA]</scope>
    <source>
        <strain>AX4</strain>
    </source>
</reference>
<protein>
    <recommendedName>
        <fullName evidence="2">Eukaryotic translation initiation factor 3 subunit D</fullName>
        <shortName evidence="2">eIF3d</shortName>
    </recommendedName>
    <alternativeName>
        <fullName evidence="2">Eukaryotic translation initiation factor 3 subunit 7</fullName>
    </alternativeName>
    <alternativeName>
        <fullName evidence="2">eIF-3-zeta</fullName>
    </alternativeName>
</protein>
<evidence type="ECO:0000250" key="1">
    <source>
        <dbReference type="UniProtKB" id="K7IM66"/>
    </source>
</evidence>
<evidence type="ECO:0000255" key="2">
    <source>
        <dbReference type="HAMAP-Rule" id="MF_03003"/>
    </source>
</evidence>
<evidence type="ECO:0000256" key="3">
    <source>
        <dbReference type="SAM" id="MobiDB-lite"/>
    </source>
</evidence>
<gene>
    <name type="primary">eif3d</name>
    <name type="synonym">moe1</name>
    <name type="ORF">DDB_G0274627</name>
</gene>
<sequence>MSLELNTIKVNPTGWGPVGKLEKFTDIPYAPFSKGDKIGKCSDWNSNVRNYQRQNYGSNAFNPFTFKLEDDEDSFTLVDYTRVQNKLKNKGKTYQKQFYQQNKRGGSNAGGRGGRGGMRGGRFGSNNKYWNDRRQRNRESSIEILSSWESKEEFDLSTFKQYTVEQLPEPETIGTYGQVKYYNKVYDRINAKNEKKLQKTENSVPLIPTSDDKVIRSEYMNGNVYATDSILAVLMSAQKSVYSWDIVVQKVGARLFFELRPGTSEHLTVNENLTAHHQDDKDPINTTSSLSQEATQVNLNYWQQVLSQNVEPFKFDNELPEGDEFENCVDVGYAYKKWDLGDDIVVLARTEIDGVVEGLPGQPPKFISIKAINEHDSNRFGIEFRKKLDSQRAAILATEIKNNSTKFAKWSIQSTLAGCEMLNLGFVSRDSIRDNNNHVILGTQFYPVADLNKQNGVDMKNCWGILKHIAQTCMKLANGKYLLHRDPNRNVINLYSVPENAFDQIEEETQEEEEEEQSKGWVEESRE</sequence>
<keyword id="KW-0963">Cytoplasm</keyword>
<keyword id="KW-0396">Initiation factor</keyword>
<keyword id="KW-0648">Protein biosynthesis</keyword>
<keyword id="KW-1185">Reference proteome</keyword>
<keyword id="KW-0694">RNA-binding</keyword>
<organism>
    <name type="scientific">Dictyostelium discoideum</name>
    <name type="common">Social amoeba</name>
    <dbReference type="NCBI Taxonomy" id="44689"/>
    <lineage>
        <taxon>Eukaryota</taxon>
        <taxon>Amoebozoa</taxon>
        <taxon>Evosea</taxon>
        <taxon>Eumycetozoa</taxon>
        <taxon>Dictyostelia</taxon>
        <taxon>Dictyosteliales</taxon>
        <taxon>Dictyosteliaceae</taxon>
        <taxon>Dictyostelium</taxon>
    </lineage>
</organism>
<comment type="function">
    <text evidence="2">mRNA cap-binding component of the eukaryotic translation initiation factor 3 (eIF-3) complex, which is involved in protein synthesis of a specialized repertoire of mRNAs and, together with other initiation factors, stimulates binding of mRNA and methionyl-tRNAi to the 40S ribosome. The eIF-3 complex specifically targets and initiates translation of a subset of mRNAs involved in cell proliferation. In the eIF-3 complex, eif3d specifically recognizes and binds the 7-methylguanosine cap of a subset of mRNAs.</text>
</comment>
<comment type="subunit">
    <text evidence="2">Component of the eukaryotic translation initiation factor 3 (eIF-3) complex.</text>
</comment>
<comment type="subcellular location">
    <subcellularLocation>
        <location evidence="2">Cytoplasm</location>
    </subcellularLocation>
</comment>
<comment type="domain">
    <text evidence="2">The RNA gate region regulates mRNA cap recognition to prevent promiscuous mRNA-binding before assembly of eif3d into the full eukaryotic translation initiation factor 3 (eIF-3) complex.</text>
</comment>
<comment type="similarity">
    <text evidence="2">Belongs to the eIF-3 subunit D family.</text>
</comment>
<accession>Q554U9</accession>
<accession>Q86AR8</accession>